<feature type="chain" id="PRO_0000155539" description="Ribosomal RNA large subunit methyltransferase E">
    <location>
        <begin position="1"/>
        <end position="208"/>
    </location>
</feature>
<feature type="active site" description="Proton acceptor" evidence="1">
    <location>
        <position position="164"/>
    </location>
</feature>
<feature type="binding site" evidence="1">
    <location>
        <position position="63"/>
    </location>
    <ligand>
        <name>S-adenosyl-L-methionine</name>
        <dbReference type="ChEBI" id="CHEBI:59789"/>
    </ligand>
</feature>
<feature type="binding site" evidence="1">
    <location>
        <position position="65"/>
    </location>
    <ligand>
        <name>S-adenosyl-L-methionine</name>
        <dbReference type="ChEBI" id="CHEBI:59789"/>
    </ligand>
</feature>
<feature type="binding site" evidence="1">
    <location>
        <position position="83"/>
    </location>
    <ligand>
        <name>S-adenosyl-L-methionine</name>
        <dbReference type="ChEBI" id="CHEBI:59789"/>
    </ligand>
</feature>
<feature type="binding site" evidence="1">
    <location>
        <position position="99"/>
    </location>
    <ligand>
        <name>S-adenosyl-L-methionine</name>
        <dbReference type="ChEBI" id="CHEBI:59789"/>
    </ligand>
</feature>
<feature type="binding site" evidence="1">
    <location>
        <position position="124"/>
    </location>
    <ligand>
        <name>S-adenosyl-L-methionine</name>
        <dbReference type="ChEBI" id="CHEBI:59789"/>
    </ligand>
</feature>
<organism>
    <name type="scientific">Salmonella typhimurium (strain LT2 / SGSC1412 / ATCC 700720)</name>
    <dbReference type="NCBI Taxonomy" id="99287"/>
    <lineage>
        <taxon>Bacteria</taxon>
        <taxon>Pseudomonadati</taxon>
        <taxon>Pseudomonadota</taxon>
        <taxon>Gammaproteobacteria</taxon>
        <taxon>Enterobacterales</taxon>
        <taxon>Enterobacteriaceae</taxon>
        <taxon>Salmonella</taxon>
    </lineage>
</organism>
<evidence type="ECO:0000255" key="1">
    <source>
        <dbReference type="HAMAP-Rule" id="MF_01547"/>
    </source>
</evidence>
<name>RLME_SALTY</name>
<keyword id="KW-0963">Cytoplasm</keyword>
<keyword id="KW-0489">Methyltransferase</keyword>
<keyword id="KW-1185">Reference proteome</keyword>
<keyword id="KW-0698">rRNA processing</keyword>
<keyword id="KW-0949">S-adenosyl-L-methionine</keyword>
<keyword id="KW-0808">Transferase</keyword>
<gene>
    <name evidence="1" type="primary">rlmE</name>
    <name evidence="1" type="synonym">ftsJ</name>
    <name evidence="1" type="synonym">rrmJ</name>
    <name type="ordered locus">STM3297</name>
</gene>
<comment type="function">
    <text evidence="1">Specifically methylates the uridine in position 2552 of 23S rRNA at the 2'-O position of the ribose in the fully assembled 50S ribosomal subunit.</text>
</comment>
<comment type="catalytic activity">
    <reaction evidence="1">
        <text>uridine(2552) in 23S rRNA + S-adenosyl-L-methionine = 2'-O-methyluridine(2552) in 23S rRNA + S-adenosyl-L-homocysteine + H(+)</text>
        <dbReference type="Rhea" id="RHEA:42720"/>
        <dbReference type="Rhea" id="RHEA-COMP:10202"/>
        <dbReference type="Rhea" id="RHEA-COMP:10203"/>
        <dbReference type="ChEBI" id="CHEBI:15378"/>
        <dbReference type="ChEBI" id="CHEBI:57856"/>
        <dbReference type="ChEBI" id="CHEBI:59789"/>
        <dbReference type="ChEBI" id="CHEBI:65315"/>
        <dbReference type="ChEBI" id="CHEBI:74478"/>
        <dbReference type="EC" id="2.1.1.166"/>
    </reaction>
</comment>
<comment type="subcellular location">
    <subcellularLocation>
        <location evidence="1">Cytoplasm</location>
    </subcellularLocation>
</comment>
<comment type="similarity">
    <text evidence="1">Belongs to the class I-like SAM-binding methyltransferase superfamily. RNA methyltransferase RlmE family.</text>
</comment>
<accession>Q8ZLS7</accession>
<sequence>MTGKKRSASSSRWLQEHFSDKYVQQAQKKGLRSRAWFKLDEIQQSDKLFKPGMTVVDLGAAPGGWSQYVVTQIGGKGRIIACDLLPMDPIVGVDFLQGDFRDELVMKALLERVGDSKVQVVMSDMAPNMSGTPAVDIPRAMYLVELALEMCRDVLAPGGSFVVKVFQGEGFDEYLREIRSLFTKVKVRKPDSSRARSREVYIVATGRK</sequence>
<reference key="1">
    <citation type="journal article" date="2001" name="Nature">
        <title>Complete genome sequence of Salmonella enterica serovar Typhimurium LT2.</title>
        <authorList>
            <person name="McClelland M."/>
            <person name="Sanderson K.E."/>
            <person name="Spieth J."/>
            <person name="Clifton S.W."/>
            <person name="Latreille P."/>
            <person name="Courtney L."/>
            <person name="Porwollik S."/>
            <person name="Ali J."/>
            <person name="Dante M."/>
            <person name="Du F."/>
            <person name="Hou S."/>
            <person name="Layman D."/>
            <person name="Leonard S."/>
            <person name="Nguyen C."/>
            <person name="Scott K."/>
            <person name="Holmes A."/>
            <person name="Grewal N."/>
            <person name="Mulvaney E."/>
            <person name="Ryan E."/>
            <person name="Sun H."/>
            <person name="Florea L."/>
            <person name="Miller W."/>
            <person name="Stoneking T."/>
            <person name="Nhan M."/>
            <person name="Waterston R."/>
            <person name="Wilson R.K."/>
        </authorList>
    </citation>
    <scope>NUCLEOTIDE SEQUENCE [LARGE SCALE GENOMIC DNA]</scope>
    <source>
        <strain>LT2 / SGSC1412 / ATCC 700720</strain>
    </source>
</reference>
<dbReference type="EC" id="2.1.1.166" evidence="1"/>
<dbReference type="EMBL" id="AE006468">
    <property type="protein sequence ID" value="AAL22167.1"/>
    <property type="molecule type" value="Genomic_DNA"/>
</dbReference>
<dbReference type="RefSeq" id="NP_462208.1">
    <property type="nucleotide sequence ID" value="NC_003197.2"/>
</dbReference>
<dbReference type="RefSeq" id="WP_000145974.1">
    <property type="nucleotide sequence ID" value="NC_003197.2"/>
</dbReference>
<dbReference type="SMR" id="Q8ZLS7"/>
<dbReference type="STRING" id="99287.STM3297"/>
<dbReference type="PaxDb" id="99287-STM3297"/>
<dbReference type="GeneID" id="1254820"/>
<dbReference type="KEGG" id="stm:STM3297"/>
<dbReference type="PATRIC" id="fig|99287.12.peg.3495"/>
<dbReference type="HOGENOM" id="CLU_009422_4_0_6"/>
<dbReference type="OMA" id="HRQTDHL"/>
<dbReference type="PhylomeDB" id="Q8ZLS7"/>
<dbReference type="BioCyc" id="SENT99287:STM3297-MONOMER"/>
<dbReference type="Proteomes" id="UP000001014">
    <property type="component" value="Chromosome"/>
</dbReference>
<dbReference type="GO" id="GO:0005737">
    <property type="term" value="C:cytoplasm"/>
    <property type="evidence" value="ECO:0007669"/>
    <property type="project" value="UniProtKB-SubCell"/>
</dbReference>
<dbReference type="GO" id="GO:0008650">
    <property type="term" value="F:rRNA (uridine-2'-O-)-methyltransferase activity"/>
    <property type="evidence" value="ECO:0000318"/>
    <property type="project" value="GO_Central"/>
</dbReference>
<dbReference type="GO" id="GO:0001510">
    <property type="term" value="P:RNA methylation"/>
    <property type="evidence" value="ECO:0000318"/>
    <property type="project" value="GO_Central"/>
</dbReference>
<dbReference type="CDD" id="cd02440">
    <property type="entry name" value="AdoMet_MTases"/>
    <property type="match status" value="1"/>
</dbReference>
<dbReference type="FunFam" id="3.40.50.150:FF:000005">
    <property type="entry name" value="Ribosomal RNA large subunit methyltransferase E"/>
    <property type="match status" value="1"/>
</dbReference>
<dbReference type="Gene3D" id="3.40.50.150">
    <property type="entry name" value="Vaccinia Virus protein VP39"/>
    <property type="match status" value="1"/>
</dbReference>
<dbReference type="HAMAP" id="MF_01547">
    <property type="entry name" value="RNA_methyltr_E"/>
    <property type="match status" value="1"/>
</dbReference>
<dbReference type="InterPro" id="IPR050082">
    <property type="entry name" value="RNA_methyltr_RlmE"/>
</dbReference>
<dbReference type="InterPro" id="IPR002877">
    <property type="entry name" value="RNA_MeTrfase_FtsJ_dom"/>
</dbReference>
<dbReference type="InterPro" id="IPR015507">
    <property type="entry name" value="rRNA-MeTfrase_E"/>
</dbReference>
<dbReference type="InterPro" id="IPR004512">
    <property type="entry name" value="rRNA_MeTrfase_gammaproteobac"/>
</dbReference>
<dbReference type="InterPro" id="IPR029063">
    <property type="entry name" value="SAM-dependent_MTases_sf"/>
</dbReference>
<dbReference type="NCBIfam" id="NF008390">
    <property type="entry name" value="PRK11188.1"/>
    <property type="match status" value="1"/>
</dbReference>
<dbReference type="NCBIfam" id="TIGR00438">
    <property type="entry name" value="rrmJ"/>
    <property type="match status" value="1"/>
</dbReference>
<dbReference type="PANTHER" id="PTHR10920">
    <property type="entry name" value="RIBOSOMAL RNA METHYLTRANSFERASE"/>
    <property type="match status" value="1"/>
</dbReference>
<dbReference type="PANTHER" id="PTHR10920:SF18">
    <property type="entry name" value="RRNA METHYLTRANSFERASE 2, MITOCHONDRIAL"/>
    <property type="match status" value="1"/>
</dbReference>
<dbReference type="Pfam" id="PF01728">
    <property type="entry name" value="FtsJ"/>
    <property type="match status" value="1"/>
</dbReference>
<dbReference type="PIRSF" id="PIRSF005461">
    <property type="entry name" value="23S_rRNA_mtase"/>
    <property type="match status" value="1"/>
</dbReference>
<dbReference type="SUPFAM" id="SSF53335">
    <property type="entry name" value="S-adenosyl-L-methionine-dependent methyltransferases"/>
    <property type="match status" value="1"/>
</dbReference>
<protein>
    <recommendedName>
        <fullName evidence="1">Ribosomal RNA large subunit methyltransferase E</fullName>
        <ecNumber evidence="1">2.1.1.166</ecNumber>
    </recommendedName>
    <alternativeName>
        <fullName evidence="1">23S rRNA Um2552 methyltransferase</fullName>
    </alternativeName>
    <alternativeName>
        <fullName evidence="1">rRNA (uridine-2'-O-)-methyltransferase</fullName>
    </alternativeName>
</protein>
<proteinExistence type="inferred from homology"/>